<reference key="1">
    <citation type="submission" date="1998-10" db="EMBL/GenBank/DDBJ databases">
        <title>Isolation and characterisation of the ndhCKJ gene-cluster of Anabaena variabilis.</title>
        <authorList>
            <person name="Happe T."/>
            <person name="Schiefer W."/>
            <person name="Boehme H."/>
        </authorList>
    </citation>
    <scope>NUCLEOTIDE SEQUENCE [GENOMIC DNA]</scope>
</reference>
<reference key="2">
    <citation type="journal article" date="2014" name="Stand. Genomic Sci.">
        <title>Complete genome sequence of Anabaena variabilis ATCC 29413.</title>
        <authorList>
            <person name="Thiel T."/>
            <person name="Pratte B.S."/>
            <person name="Zhong J."/>
            <person name="Goodwin L."/>
            <person name="Copeland A."/>
            <person name="Lucas S."/>
            <person name="Han C."/>
            <person name="Pitluck S."/>
            <person name="Land M.L."/>
            <person name="Kyrpides N.C."/>
            <person name="Woyke T."/>
        </authorList>
    </citation>
    <scope>NUCLEOTIDE SEQUENCE [LARGE SCALE GENOMIC DNA]</scope>
    <source>
        <strain>ATCC 29413 / PCC 7937</strain>
    </source>
</reference>
<accession>P0A3S6</accession>
<accession>Q3MC06</accession>
<accession>Q44239</accession>
<accession>Q9WVX6</accession>
<sequence length="120" mass="13621">MFVLSGYEYLLGFLIICSLVPALALSASKLLRPTGNSLERRTTYESGMEPIGGAWIQFNIRYYMFALVFVVFDVETVFLYPWAVAFHRLGLLAFIEALIFIAILVVALVYAWRKGALEWS</sequence>
<keyword id="KW-0472">Membrane</keyword>
<keyword id="KW-0520">NAD</keyword>
<keyword id="KW-0521">NADP</keyword>
<keyword id="KW-0618">Plastoquinone</keyword>
<keyword id="KW-0874">Quinone</keyword>
<keyword id="KW-0793">Thylakoid</keyword>
<keyword id="KW-1278">Translocase</keyword>
<keyword id="KW-0812">Transmembrane</keyword>
<keyword id="KW-1133">Transmembrane helix</keyword>
<keyword id="KW-0813">Transport</keyword>
<gene>
    <name evidence="1" type="primary">ndhC</name>
    <name type="ordered locus">Ava_1858</name>
</gene>
<proteinExistence type="inferred from homology"/>
<comment type="function">
    <text evidence="1">NDH-1 shuttles electrons from an unknown electron donor, via FMN and iron-sulfur (Fe-S) centers, to quinones in the respiratory and/or the photosynthetic chain. The immediate electron acceptor for the enzyme in this species is believed to be plastoquinone. Couples the redox reaction to proton translocation, and thus conserves the redox energy in a proton gradient. Cyanobacterial NDH-1 also plays a role in inorganic carbon-concentration.</text>
</comment>
<comment type="catalytic activity">
    <reaction evidence="1">
        <text>a plastoquinone + NADH + (n+1) H(+)(in) = a plastoquinol + NAD(+) + n H(+)(out)</text>
        <dbReference type="Rhea" id="RHEA:42608"/>
        <dbReference type="Rhea" id="RHEA-COMP:9561"/>
        <dbReference type="Rhea" id="RHEA-COMP:9562"/>
        <dbReference type="ChEBI" id="CHEBI:15378"/>
        <dbReference type="ChEBI" id="CHEBI:17757"/>
        <dbReference type="ChEBI" id="CHEBI:57540"/>
        <dbReference type="ChEBI" id="CHEBI:57945"/>
        <dbReference type="ChEBI" id="CHEBI:62192"/>
    </reaction>
</comment>
<comment type="catalytic activity">
    <reaction evidence="1">
        <text>a plastoquinone + NADPH + (n+1) H(+)(in) = a plastoquinol + NADP(+) + n H(+)(out)</text>
        <dbReference type="Rhea" id="RHEA:42612"/>
        <dbReference type="Rhea" id="RHEA-COMP:9561"/>
        <dbReference type="Rhea" id="RHEA-COMP:9562"/>
        <dbReference type="ChEBI" id="CHEBI:15378"/>
        <dbReference type="ChEBI" id="CHEBI:17757"/>
        <dbReference type="ChEBI" id="CHEBI:57783"/>
        <dbReference type="ChEBI" id="CHEBI:58349"/>
        <dbReference type="ChEBI" id="CHEBI:62192"/>
    </reaction>
</comment>
<comment type="subunit">
    <text evidence="1">NDH-1 can be composed of about 15 different subunits; different subcomplexes with different compositions have been identified which probably have different functions.</text>
</comment>
<comment type="subcellular location">
    <subcellularLocation>
        <location evidence="1">Cellular thylakoid membrane</location>
        <topology evidence="1">Multi-pass membrane protein</topology>
    </subcellularLocation>
</comment>
<comment type="similarity">
    <text evidence="1">Belongs to the complex I subunit 3 family.</text>
</comment>
<protein>
    <recommendedName>
        <fullName evidence="1">NAD(P)H-quinone oxidoreductase subunit 3</fullName>
        <ecNumber evidence="1">7.1.1.-</ecNumber>
    </recommendedName>
    <alternativeName>
        <fullName evidence="1">NAD(P)H dehydrogenase subunit 3</fullName>
    </alternativeName>
    <alternativeName>
        <fullName evidence="1">NADH-plastoquinone oxidoreductase subunit 3</fullName>
    </alternativeName>
    <alternativeName>
        <fullName evidence="1">NDH-1 subunit 3</fullName>
        <shortName evidence="1">NDH-C</shortName>
    </alternativeName>
</protein>
<evidence type="ECO:0000255" key="1">
    <source>
        <dbReference type="HAMAP-Rule" id="MF_01394"/>
    </source>
</evidence>
<dbReference type="EC" id="7.1.1.-" evidence="1"/>
<dbReference type="EMBL" id="AJ012181">
    <property type="protein sequence ID" value="CAB45646.1"/>
    <property type="molecule type" value="Genomic_DNA"/>
</dbReference>
<dbReference type="EMBL" id="CP000117">
    <property type="protein sequence ID" value="ABA21480.1"/>
    <property type="molecule type" value="Genomic_DNA"/>
</dbReference>
<dbReference type="RefSeq" id="WP_010997983.1">
    <property type="nucleotide sequence ID" value="NC_007413.1"/>
</dbReference>
<dbReference type="SMR" id="P0A3S6"/>
<dbReference type="STRING" id="240292.Ava_1858"/>
<dbReference type="GeneID" id="58724530"/>
<dbReference type="KEGG" id="ava:Ava_1858"/>
<dbReference type="eggNOG" id="COG0838">
    <property type="taxonomic scope" value="Bacteria"/>
</dbReference>
<dbReference type="HOGENOM" id="CLU_119549_1_1_3"/>
<dbReference type="Proteomes" id="UP000002533">
    <property type="component" value="Chromosome"/>
</dbReference>
<dbReference type="GO" id="GO:0030964">
    <property type="term" value="C:NADH dehydrogenase complex"/>
    <property type="evidence" value="ECO:0007669"/>
    <property type="project" value="TreeGrafter"/>
</dbReference>
<dbReference type="GO" id="GO:0031676">
    <property type="term" value="C:plasma membrane-derived thylakoid membrane"/>
    <property type="evidence" value="ECO:0007669"/>
    <property type="project" value="UniProtKB-SubCell"/>
</dbReference>
<dbReference type="GO" id="GO:0008137">
    <property type="term" value="F:NADH dehydrogenase (ubiquinone) activity"/>
    <property type="evidence" value="ECO:0007669"/>
    <property type="project" value="InterPro"/>
</dbReference>
<dbReference type="GO" id="GO:0048038">
    <property type="term" value="F:quinone binding"/>
    <property type="evidence" value="ECO:0007669"/>
    <property type="project" value="UniProtKB-KW"/>
</dbReference>
<dbReference type="GO" id="GO:0019684">
    <property type="term" value="P:photosynthesis, light reaction"/>
    <property type="evidence" value="ECO:0007669"/>
    <property type="project" value="UniProtKB-UniRule"/>
</dbReference>
<dbReference type="FunFam" id="1.20.58.1610:FF:000001">
    <property type="entry name" value="NAD(P)H-quinone oxidoreductase subunit 3, chloroplastic"/>
    <property type="match status" value="1"/>
</dbReference>
<dbReference type="Gene3D" id="1.20.58.1610">
    <property type="entry name" value="NADH:ubiquinone/plastoquinone oxidoreductase, chain 3"/>
    <property type="match status" value="1"/>
</dbReference>
<dbReference type="HAMAP" id="MF_01394">
    <property type="entry name" value="NDH1_NuoA"/>
    <property type="match status" value="1"/>
</dbReference>
<dbReference type="InterPro" id="IPR023043">
    <property type="entry name" value="NAD(P)H_OxRDtase_bac/plastid"/>
</dbReference>
<dbReference type="InterPro" id="IPR000440">
    <property type="entry name" value="NADH_UbQ/plastoQ_OxRdtase_su3"/>
</dbReference>
<dbReference type="InterPro" id="IPR038430">
    <property type="entry name" value="NDAH_ubi_oxred_su3_sf"/>
</dbReference>
<dbReference type="PANTHER" id="PTHR11058">
    <property type="entry name" value="NADH-UBIQUINONE OXIDOREDUCTASE CHAIN 3"/>
    <property type="match status" value="1"/>
</dbReference>
<dbReference type="PANTHER" id="PTHR11058:SF9">
    <property type="entry name" value="NADH-UBIQUINONE OXIDOREDUCTASE CHAIN 3"/>
    <property type="match status" value="1"/>
</dbReference>
<dbReference type="Pfam" id="PF00507">
    <property type="entry name" value="Oxidored_q4"/>
    <property type="match status" value="1"/>
</dbReference>
<feature type="chain" id="PRO_0000117858" description="NAD(P)H-quinone oxidoreductase subunit 3">
    <location>
        <begin position="1"/>
        <end position="120"/>
    </location>
</feature>
<feature type="transmembrane region" description="Helical" evidence="1">
    <location>
        <begin position="1"/>
        <end position="21"/>
    </location>
</feature>
<feature type="transmembrane region" description="Helical" evidence="1">
    <location>
        <begin position="64"/>
        <end position="84"/>
    </location>
</feature>
<feature type="transmembrane region" description="Helical" evidence="1">
    <location>
        <begin position="89"/>
        <end position="109"/>
    </location>
</feature>
<name>NU3C_TRIV2</name>
<organism>
    <name type="scientific">Trichormus variabilis (strain ATCC 29413 / PCC 7937)</name>
    <name type="common">Anabaena variabilis</name>
    <dbReference type="NCBI Taxonomy" id="240292"/>
    <lineage>
        <taxon>Bacteria</taxon>
        <taxon>Bacillati</taxon>
        <taxon>Cyanobacteriota</taxon>
        <taxon>Cyanophyceae</taxon>
        <taxon>Nostocales</taxon>
        <taxon>Nostocaceae</taxon>
        <taxon>Trichormus</taxon>
    </lineage>
</organism>